<sequence length="771" mass="86241">MSVRNLTNNRHSNSENSVSGSENSFYSSNEQSRQSSSLEPADGQNVRVSGNPFLGSEEFDEDYNSPSGDDERRGANEYSSSSSINYNNDPNSDTSLLANEKNSPERNGQRMSDYKGYYAKTNLTSANNLNNHNNNNYKNIISSSNDNSFASHLQPPDRNLPSHPSSNNMSSFSNNSLIKSPPPFDRYPLVGTRHISAAQSQSQNLINEKKRANMTGSSSSAHDSSLSSTNLYMGEQDFSPFGGYPASFFPLTLDEKEDDDYIHNPNVEEEAKLDRRRFVDDFKHMDRRSFLGLLGILFLFMAGIFIFIVLPAITFSGVVYHHEHVHAANSAGSSSSNTTSKSLTEYQYPQLAAIRTTLVDPDTPDSAKTRVAKDGSKWQLVFSDEFNAEGRTFYDGDDQFWTAPDIHYDATKDLEWYSPDAVTTTNGTLTLRMDAFRNHDLYYRSGMVQSWNKLCFTEGALEVSANLPNYGRVTGLWPGMWTMGNLGRPGYLASTQGVWPYSYEACDAGITPNQSSPDGISYLPGQKLSVCTCDNEDHPNQGVGRGAPEIDILEGEADTILGVGVASQSLQIAPFDIWYMPDYDFIEVYNFTTTTMNTYAGGPFQQAVSAISTLNVTWYEFGEEAGYFQKYAIEYLNDDDNGYIRWFVGENPTFTLYATSLHPSGNIDWRRISKEPMSAILNLGISNNWAYIDWQYIFFPVTMSIDYVRLYQPKGSTSITCDPEDYPTYDYIQSHLNAYYNANLTDWEQAGYTFPKNILTGGCSSSKFSLS</sequence>
<dbReference type="EMBL" id="L18859">
    <property type="protein sequence ID" value="AAA02557.1"/>
    <property type="molecule type" value="Unassigned_DNA"/>
</dbReference>
<dbReference type="EMBL" id="Z72928">
    <property type="protein sequence ID" value="CAA97156.1"/>
    <property type="molecule type" value="Genomic_DNA"/>
</dbReference>
<dbReference type="EMBL" id="BK006941">
    <property type="protein sequence ID" value="DAA08234.1"/>
    <property type="molecule type" value="Genomic_DNA"/>
</dbReference>
<dbReference type="PIR" id="S40966">
    <property type="entry name" value="S40966"/>
</dbReference>
<dbReference type="RefSeq" id="NP_011659.3">
    <property type="nucleotide sequence ID" value="NM_001181272.3"/>
</dbReference>
<dbReference type="BioGRID" id="33390">
    <property type="interactions" value="172"/>
</dbReference>
<dbReference type="DIP" id="DIP-6666N"/>
<dbReference type="FunCoup" id="P33336">
    <property type="interactions" value="66"/>
</dbReference>
<dbReference type="IntAct" id="P33336">
    <property type="interactions" value="3"/>
</dbReference>
<dbReference type="STRING" id="4932.YGR143W"/>
<dbReference type="CAZy" id="GH16">
    <property type="family name" value="Glycoside Hydrolase Family 16"/>
</dbReference>
<dbReference type="GlyCosmos" id="P33336">
    <property type="glycosylation" value="6 sites, No reported glycans"/>
</dbReference>
<dbReference type="GlyGen" id="P33336">
    <property type="glycosylation" value="6 sites"/>
</dbReference>
<dbReference type="iPTMnet" id="P33336"/>
<dbReference type="PaxDb" id="4932-YGR143W"/>
<dbReference type="PeptideAtlas" id="P33336"/>
<dbReference type="EnsemblFungi" id="YGR143W_mRNA">
    <property type="protein sequence ID" value="YGR143W"/>
    <property type="gene ID" value="YGR143W"/>
</dbReference>
<dbReference type="GeneID" id="853045"/>
<dbReference type="KEGG" id="sce:YGR143W"/>
<dbReference type="AGR" id="SGD:S000003375"/>
<dbReference type="SGD" id="S000003375">
    <property type="gene designation" value="SKN1"/>
</dbReference>
<dbReference type="VEuPathDB" id="FungiDB:YGR143W"/>
<dbReference type="eggNOG" id="ENOG502QR13">
    <property type="taxonomic scope" value="Eukaryota"/>
</dbReference>
<dbReference type="GeneTree" id="ENSGT00940000176454"/>
<dbReference type="HOGENOM" id="CLU_010811_4_3_1"/>
<dbReference type="InParanoid" id="P33336"/>
<dbReference type="OMA" id="PYNYQYE"/>
<dbReference type="OrthoDB" id="412647at2759"/>
<dbReference type="BioCyc" id="YEAST:G3O-30847-MONOMER"/>
<dbReference type="BioGRID-ORCS" id="853045">
    <property type="hits" value="1 hit in 10 CRISPR screens"/>
</dbReference>
<dbReference type="PRO" id="PR:P33336"/>
<dbReference type="Proteomes" id="UP000002311">
    <property type="component" value="Chromosome VII"/>
</dbReference>
<dbReference type="RNAct" id="P33336">
    <property type="molecule type" value="protein"/>
</dbReference>
<dbReference type="GO" id="GO:0005789">
    <property type="term" value="C:endoplasmic reticulum membrane"/>
    <property type="evidence" value="ECO:0000318"/>
    <property type="project" value="GO_Central"/>
</dbReference>
<dbReference type="GO" id="GO:0016020">
    <property type="term" value="C:membrane"/>
    <property type="evidence" value="ECO:0000314"/>
    <property type="project" value="SGD"/>
</dbReference>
<dbReference type="GO" id="GO:0005886">
    <property type="term" value="C:plasma membrane"/>
    <property type="evidence" value="ECO:0000318"/>
    <property type="project" value="GO_Central"/>
</dbReference>
<dbReference type="GO" id="GO:0015926">
    <property type="term" value="F:glucosidase activity"/>
    <property type="evidence" value="ECO:0000315"/>
    <property type="project" value="SGD"/>
</dbReference>
<dbReference type="GO" id="GO:0006078">
    <property type="term" value="P:(1-&gt;6)-beta-D-glucan biosynthetic process"/>
    <property type="evidence" value="ECO:0000315"/>
    <property type="project" value="SGD"/>
</dbReference>
<dbReference type="GO" id="GO:0031505">
    <property type="term" value="P:fungal-type cell wall organization"/>
    <property type="evidence" value="ECO:0000315"/>
    <property type="project" value="SGD"/>
</dbReference>
<dbReference type="GO" id="GO:0010507">
    <property type="term" value="P:negative regulation of autophagy"/>
    <property type="evidence" value="ECO:0000316"/>
    <property type="project" value="SGD"/>
</dbReference>
<dbReference type="GO" id="GO:0030148">
    <property type="term" value="P:sphingolipid biosynthetic process"/>
    <property type="evidence" value="ECO:0000315"/>
    <property type="project" value="SGD"/>
</dbReference>
<dbReference type="CDD" id="cd02180">
    <property type="entry name" value="GH16_fungal_KRE6_glucanase"/>
    <property type="match status" value="1"/>
</dbReference>
<dbReference type="FunFam" id="2.60.120.200:FF:000140">
    <property type="entry name" value="Beta-glucan synthesis-associated protein"/>
    <property type="match status" value="1"/>
</dbReference>
<dbReference type="FunFam" id="2.60.120.200:FF:000228">
    <property type="entry name" value="Beta-glucan synthesis-associated protein KRE6"/>
    <property type="match status" value="1"/>
</dbReference>
<dbReference type="Gene3D" id="2.60.120.200">
    <property type="match status" value="1"/>
</dbReference>
<dbReference type="InterPro" id="IPR013320">
    <property type="entry name" value="ConA-like_dom_sf"/>
</dbReference>
<dbReference type="InterPro" id="IPR000757">
    <property type="entry name" value="GH16"/>
</dbReference>
<dbReference type="InterPro" id="IPR005629">
    <property type="entry name" value="Skn1/Kre6/Sbg1"/>
</dbReference>
<dbReference type="PANTHER" id="PTHR31361">
    <property type="entry name" value="BETA-GLUCAN SYNTHESIS-ASSOCIATED PROTEIN KRE6-RELATED"/>
    <property type="match status" value="1"/>
</dbReference>
<dbReference type="PANTHER" id="PTHR31361:SF1">
    <property type="entry name" value="BETA-GLUCAN SYNTHESIS-ASSOCIATED PROTEIN KRE6-RELATED"/>
    <property type="match status" value="1"/>
</dbReference>
<dbReference type="Pfam" id="PF03935">
    <property type="entry name" value="SKN1_KRE6_Sbg1"/>
    <property type="match status" value="1"/>
</dbReference>
<dbReference type="SUPFAM" id="SSF49899">
    <property type="entry name" value="Concanavalin A-like lectins/glucanases"/>
    <property type="match status" value="1"/>
</dbReference>
<dbReference type="PROSITE" id="PS51762">
    <property type="entry name" value="GH16_2"/>
    <property type="match status" value="1"/>
</dbReference>
<accession>P33336</accession>
<accession>D6VUS3</accession>
<feature type="chain" id="PRO_0000097780" description="Beta-glucan synthesis-associated protein SKN1">
    <location>
        <begin position="1"/>
        <end position="771"/>
    </location>
</feature>
<feature type="topological domain" description="Cytoplasmic" evidence="2">
    <location>
        <begin position="1"/>
        <end position="289"/>
    </location>
</feature>
<feature type="transmembrane region" description="Helical; Signal-anchor for type II membrane protein" evidence="2">
    <location>
        <begin position="290"/>
        <end position="310"/>
    </location>
</feature>
<feature type="topological domain" description="Lumenal" evidence="2">
    <location>
        <begin position="311"/>
        <end position="771"/>
    </location>
</feature>
<feature type="domain" description="GH16" evidence="3">
    <location>
        <begin position="353"/>
        <end position="716"/>
    </location>
</feature>
<feature type="region of interest" description="Disordered" evidence="4">
    <location>
        <begin position="1"/>
        <end position="112"/>
    </location>
</feature>
<feature type="region of interest" description="Disordered" evidence="4">
    <location>
        <begin position="126"/>
        <end position="186"/>
    </location>
</feature>
<feature type="compositionally biased region" description="Polar residues" evidence="4">
    <location>
        <begin position="1"/>
        <end position="11"/>
    </location>
</feature>
<feature type="compositionally biased region" description="Low complexity" evidence="4">
    <location>
        <begin position="14"/>
        <end position="37"/>
    </location>
</feature>
<feature type="compositionally biased region" description="Low complexity" evidence="4">
    <location>
        <begin position="76"/>
        <end position="93"/>
    </location>
</feature>
<feature type="compositionally biased region" description="Low complexity" evidence="4">
    <location>
        <begin position="126"/>
        <end position="152"/>
    </location>
</feature>
<feature type="compositionally biased region" description="Low complexity" evidence="4">
    <location>
        <begin position="159"/>
        <end position="177"/>
    </location>
</feature>
<feature type="modified residue" description="Phosphoserine" evidence="9">
    <location>
        <position position="56"/>
    </location>
</feature>
<feature type="modified residue" description="Phosphoserine" evidence="9">
    <location>
        <position position="65"/>
    </location>
</feature>
<feature type="modified residue" description="Phosphoserine" evidence="9">
    <location>
        <position position="67"/>
    </location>
</feature>
<feature type="modified residue" description="Phosphoserine" evidence="1">
    <location>
        <position position="92"/>
    </location>
</feature>
<feature type="modified residue" description="Phosphoserine" evidence="7">
    <location>
        <position position="103"/>
    </location>
</feature>
<feature type="modified residue" description="Phosphoserine" evidence="1">
    <location>
        <position position="142"/>
    </location>
</feature>
<feature type="modified residue" description="Phosphoserine" evidence="1">
    <location>
        <position position="162"/>
    </location>
</feature>
<feature type="modified residue" description="Phosphoserine" evidence="1">
    <location>
        <position position="165"/>
    </location>
</feature>
<feature type="modified residue" description="Phosphoserine" evidence="1">
    <location>
        <position position="170"/>
    </location>
</feature>
<feature type="modified residue" description="Phosphoserine" evidence="8">
    <location>
        <position position="176"/>
    </location>
</feature>
<feature type="glycosylation site" description="N-linked (GlcNAc...) asparagine" evidence="2">
    <location>
        <position position="337"/>
    </location>
</feature>
<feature type="glycosylation site" description="N-linked (GlcNAc...) asparagine" evidence="2">
    <location>
        <position position="426"/>
    </location>
</feature>
<feature type="glycosylation site" description="N-linked (GlcNAc...) asparagine" evidence="2">
    <location>
        <position position="513"/>
    </location>
</feature>
<feature type="glycosylation site" description="N-linked (GlcNAc...) asparagine" evidence="2">
    <location>
        <position position="590"/>
    </location>
</feature>
<feature type="glycosylation site" description="N-linked (GlcNAc...) asparagine" evidence="2">
    <location>
        <position position="615"/>
    </location>
</feature>
<feature type="glycosylation site" description="N-linked (GlcNAc...) asparagine" evidence="2">
    <location>
        <position position="743"/>
    </location>
</feature>
<proteinExistence type="evidence at protein level"/>
<keyword id="KW-0961">Cell wall biogenesis/degradation</keyword>
<keyword id="KW-0325">Glycoprotein</keyword>
<keyword id="KW-0472">Membrane</keyword>
<keyword id="KW-0597">Phosphoprotein</keyword>
<keyword id="KW-1185">Reference proteome</keyword>
<keyword id="KW-0735">Signal-anchor</keyword>
<keyword id="KW-0812">Transmembrane</keyword>
<keyword id="KW-1133">Transmembrane helix</keyword>
<reference key="1">
    <citation type="journal article" date="1993" name="Mol. Cell. Biol.">
        <title>SKN1 and KRE6 define a pair of functional homologs encoding putative membrane proteins involved in beta-glucan synthesis.</title>
        <authorList>
            <person name="Roemer T."/>
            <person name="Delaney S."/>
            <person name="Bussey H."/>
        </authorList>
    </citation>
    <scope>NUCLEOTIDE SEQUENCE</scope>
</reference>
<reference key="2">
    <citation type="journal article" date="1997" name="Nature">
        <title>The nucleotide sequence of Saccharomyces cerevisiae chromosome VII.</title>
        <authorList>
            <person name="Tettelin H."/>
            <person name="Agostoni-Carbone M.L."/>
            <person name="Albermann K."/>
            <person name="Albers M."/>
            <person name="Arroyo J."/>
            <person name="Backes U."/>
            <person name="Barreiros T."/>
            <person name="Bertani I."/>
            <person name="Bjourson A.J."/>
            <person name="Brueckner M."/>
            <person name="Bruschi C.V."/>
            <person name="Carignani G."/>
            <person name="Castagnoli L."/>
            <person name="Cerdan E."/>
            <person name="Clemente M.L."/>
            <person name="Coblenz A."/>
            <person name="Coglievina M."/>
            <person name="Coissac E."/>
            <person name="Defoor E."/>
            <person name="Del Bino S."/>
            <person name="Delius H."/>
            <person name="Delneri D."/>
            <person name="de Wergifosse P."/>
            <person name="Dujon B."/>
            <person name="Durand P."/>
            <person name="Entian K.-D."/>
            <person name="Eraso P."/>
            <person name="Escribano V."/>
            <person name="Fabiani L."/>
            <person name="Fartmann B."/>
            <person name="Feroli F."/>
            <person name="Feuermann M."/>
            <person name="Frontali L."/>
            <person name="Garcia-Gonzalez M."/>
            <person name="Garcia-Saez M.I."/>
            <person name="Goffeau A."/>
            <person name="Guerreiro P."/>
            <person name="Hani J."/>
            <person name="Hansen M."/>
            <person name="Hebling U."/>
            <person name="Hernandez K."/>
            <person name="Heumann K."/>
            <person name="Hilger F."/>
            <person name="Hofmann B."/>
            <person name="Indge K.J."/>
            <person name="James C.M."/>
            <person name="Klima R."/>
            <person name="Koetter P."/>
            <person name="Kramer B."/>
            <person name="Kramer W."/>
            <person name="Lauquin G."/>
            <person name="Leuther H."/>
            <person name="Louis E.J."/>
            <person name="Maillier E."/>
            <person name="Marconi A."/>
            <person name="Martegani E."/>
            <person name="Mazon M.J."/>
            <person name="Mazzoni C."/>
            <person name="McReynolds A.D.K."/>
            <person name="Melchioretto P."/>
            <person name="Mewes H.-W."/>
            <person name="Minenkova O."/>
            <person name="Mueller-Auer S."/>
            <person name="Nawrocki A."/>
            <person name="Netter P."/>
            <person name="Neu R."/>
            <person name="Nombela C."/>
            <person name="Oliver S.G."/>
            <person name="Panzeri L."/>
            <person name="Paoluzi S."/>
            <person name="Plevani P."/>
            <person name="Portetelle D."/>
            <person name="Portillo F."/>
            <person name="Potier S."/>
            <person name="Purnelle B."/>
            <person name="Rieger M."/>
            <person name="Riles L."/>
            <person name="Rinaldi T."/>
            <person name="Robben J."/>
            <person name="Rodrigues-Pousada C."/>
            <person name="Rodriguez-Belmonte E."/>
            <person name="Rodriguez-Torres A.M."/>
            <person name="Rose M."/>
            <person name="Ruzzi M."/>
            <person name="Saliola M."/>
            <person name="Sanchez-Perez M."/>
            <person name="Schaefer B."/>
            <person name="Schaefer M."/>
            <person name="Scharfe M."/>
            <person name="Schmidheini T."/>
            <person name="Schreer A."/>
            <person name="Skala J."/>
            <person name="Souciet J.-L."/>
            <person name="Steensma H.Y."/>
            <person name="Talla E."/>
            <person name="Thierry A."/>
            <person name="Vandenbol M."/>
            <person name="van der Aart Q.J.M."/>
            <person name="Van Dyck L."/>
            <person name="Vanoni M."/>
            <person name="Verhasselt P."/>
            <person name="Voet M."/>
            <person name="Volckaert G."/>
            <person name="Wambutt R."/>
            <person name="Watson M.D."/>
            <person name="Weber N."/>
            <person name="Wedler E."/>
            <person name="Wedler H."/>
            <person name="Wipfli P."/>
            <person name="Wolf K."/>
            <person name="Wright L.F."/>
            <person name="Zaccaria P."/>
            <person name="Zimmermann M."/>
            <person name="Zollner A."/>
            <person name="Kleine K."/>
        </authorList>
    </citation>
    <scope>NUCLEOTIDE SEQUENCE [LARGE SCALE GENOMIC DNA]</scope>
    <source>
        <strain>ATCC 204508 / S288c</strain>
    </source>
</reference>
<reference key="3">
    <citation type="journal article" date="2014" name="G3 (Bethesda)">
        <title>The reference genome sequence of Saccharomyces cerevisiae: Then and now.</title>
        <authorList>
            <person name="Engel S.R."/>
            <person name="Dietrich F.S."/>
            <person name="Fisk D.G."/>
            <person name="Binkley G."/>
            <person name="Balakrishnan R."/>
            <person name="Costanzo M.C."/>
            <person name="Dwight S.S."/>
            <person name="Hitz B.C."/>
            <person name="Karra K."/>
            <person name="Nash R.S."/>
            <person name="Weng S."/>
            <person name="Wong E.D."/>
            <person name="Lloyd P."/>
            <person name="Skrzypek M.S."/>
            <person name="Miyasato S.R."/>
            <person name="Simison M."/>
            <person name="Cherry J.M."/>
        </authorList>
    </citation>
    <scope>GENOME REANNOTATION</scope>
    <source>
        <strain>ATCC 204508 / S288c</strain>
    </source>
</reference>
<reference key="4">
    <citation type="journal article" date="1994" name="J. Cell Biol.">
        <title>Characterization of the yeast (1--&gt;6)-beta-glucan biosynthetic components, Kre6p and Skn1p, and genetic interactions between the PKC1 pathway and extracellular matrix assembly.</title>
        <authorList>
            <person name="Roemer T."/>
            <person name="Paravicini G."/>
            <person name="Payton M.A."/>
            <person name="Bussey H."/>
        </authorList>
    </citation>
    <scope>CHARACTERIZATION</scope>
</reference>
<reference key="5">
    <citation type="journal article" date="2003" name="Nature">
        <title>Global analysis of protein expression in yeast.</title>
        <authorList>
            <person name="Ghaemmaghami S."/>
            <person name="Huh W.-K."/>
            <person name="Bower K."/>
            <person name="Howson R.W."/>
            <person name="Belle A."/>
            <person name="Dephoure N."/>
            <person name="O'Shea E.K."/>
            <person name="Weissman J.S."/>
        </authorList>
    </citation>
    <scope>LEVEL OF PROTEIN EXPRESSION [LARGE SCALE ANALYSIS]</scope>
</reference>
<reference key="6">
    <citation type="journal article" date="2007" name="Proc. Natl. Acad. Sci. U.S.A.">
        <title>Analysis of phosphorylation sites on proteins from Saccharomyces cerevisiae by electron transfer dissociation (ETD) mass spectrometry.</title>
        <authorList>
            <person name="Chi A."/>
            <person name="Huttenhower C."/>
            <person name="Geer L.Y."/>
            <person name="Coon J.J."/>
            <person name="Syka J.E.P."/>
            <person name="Bai D.L."/>
            <person name="Shabanowitz J."/>
            <person name="Burke D.J."/>
            <person name="Troyanskaya O.G."/>
            <person name="Hunt D.F."/>
        </authorList>
    </citation>
    <scope>PHOSPHORYLATION [LARGE SCALE ANALYSIS] AT SER-103</scope>
    <scope>IDENTIFICATION BY MASS SPECTROMETRY [LARGE SCALE ANALYSIS]</scope>
</reference>
<reference key="7">
    <citation type="journal article" date="2008" name="Mol. Cell. Proteomics">
        <title>A multidimensional chromatography technology for in-depth phosphoproteome analysis.</title>
        <authorList>
            <person name="Albuquerque C.P."/>
            <person name="Smolka M.B."/>
            <person name="Payne S.H."/>
            <person name="Bafna V."/>
            <person name="Eng J."/>
            <person name="Zhou H."/>
        </authorList>
    </citation>
    <scope>PHOSPHORYLATION [LARGE SCALE ANALYSIS] AT SER-176</scope>
    <scope>IDENTIFICATION BY MASS SPECTROMETRY [LARGE SCALE ANALYSIS]</scope>
</reference>
<reference key="8">
    <citation type="journal article" date="2009" name="Science">
        <title>Global analysis of Cdk1 substrate phosphorylation sites provides insights into evolution.</title>
        <authorList>
            <person name="Holt L.J."/>
            <person name="Tuch B.B."/>
            <person name="Villen J."/>
            <person name="Johnson A.D."/>
            <person name="Gygi S.P."/>
            <person name="Morgan D.O."/>
        </authorList>
    </citation>
    <scope>PHOSPHORYLATION [LARGE SCALE ANALYSIS] AT SER-56; SER-65 AND SER-67</scope>
    <scope>IDENTIFICATION BY MASS SPECTROMETRY [LARGE SCALE ANALYSIS]</scope>
</reference>
<reference key="9">
    <citation type="journal article" date="2012" name="Proteomics">
        <title>Sites of ubiquitin attachment in Saccharomyces cerevisiae.</title>
        <authorList>
            <person name="Starita L.M."/>
            <person name="Lo R.S."/>
            <person name="Eng J.K."/>
            <person name="von Haller P.D."/>
            <person name="Fields S."/>
        </authorList>
    </citation>
    <scope>IDENTIFICATION BY MASS SPECTROMETRY [LARGE SCALE ANALYSIS]</scope>
</reference>
<name>SKN1_YEAST</name>
<evidence type="ECO:0000250" key="1">
    <source>
        <dbReference type="UniProtKB" id="P32486"/>
    </source>
</evidence>
<evidence type="ECO:0000255" key="2"/>
<evidence type="ECO:0000255" key="3">
    <source>
        <dbReference type="PROSITE-ProRule" id="PRU01098"/>
    </source>
</evidence>
<evidence type="ECO:0000256" key="4">
    <source>
        <dbReference type="SAM" id="MobiDB-lite"/>
    </source>
</evidence>
<evidence type="ECO:0000269" key="5">
    <source>
    </source>
</evidence>
<evidence type="ECO:0000305" key="6"/>
<evidence type="ECO:0007744" key="7">
    <source>
    </source>
</evidence>
<evidence type="ECO:0007744" key="8">
    <source>
    </source>
</evidence>
<evidence type="ECO:0007744" key="9">
    <source>
    </source>
</evidence>
<protein>
    <recommendedName>
        <fullName>Beta-glucan synthesis-associated protein SKN1</fullName>
    </recommendedName>
</protein>
<organism>
    <name type="scientific">Saccharomyces cerevisiae (strain ATCC 204508 / S288c)</name>
    <name type="common">Baker's yeast</name>
    <dbReference type="NCBI Taxonomy" id="559292"/>
    <lineage>
        <taxon>Eukaryota</taxon>
        <taxon>Fungi</taxon>
        <taxon>Dikarya</taxon>
        <taxon>Ascomycota</taxon>
        <taxon>Saccharomycotina</taxon>
        <taxon>Saccharomycetes</taxon>
        <taxon>Saccharomycetales</taxon>
        <taxon>Saccharomycetaceae</taxon>
        <taxon>Saccharomyces</taxon>
    </lineage>
</organism>
<gene>
    <name type="primary">SKN1</name>
    <name type="ordered locus">YGR143W</name>
</gene>
<comment type="function">
    <text>Required for synthesis of the major beta-glucans of the yeast cell wall.</text>
</comment>
<comment type="subcellular location">
    <subcellularLocation>
        <location>Membrane</location>
        <topology>Single-pass type II membrane protein</topology>
    </subcellularLocation>
</comment>
<comment type="miscellaneous">
    <text evidence="5">Present with 468 molecules/cell in log phase SD medium.</text>
</comment>
<comment type="similarity">
    <text evidence="6">Belongs to the SKN1/KRE6 family.</text>
</comment>